<keyword id="KW-0067">ATP-binding</keyword>
<keyword id="KW-0143">Chaperone</keyword>
<keyword id="KW-0963">Cytoplasm</keyword>
<keyword id="KW-0547">Nucleotide-binding</keyword>
<organism>
    <name type="scientific">Lactobacillus johnsonii (strain CNCM I-12250 / La1 / NCC 533)</name>
    <dbReference type="NCBI Taxonomy" id="257314"/>
    <lineage>
        <taxon>Bacteria</taxon>
        <taxon>Bacillati</taxon>
        <taxon>Bacillota</taxon>
        <taxon>Bacilli</taxon>
        <taxon>Lactobacillales</taxon>
        <taxon>Lactobacillaceae</taxon>
        <taxon>Lactobacillus</taxon>
    </lineage>
</organism>
<dbReference type="EMBL" id="AE017198">
    <property type="protein sequence ID" value="AAS08934.1"/>
    <property type="molecule type" value="Genomic_DNA"/>
</dbReference>
<dbReference type="RefSeq" id="WP_011161951.1">
    <property type="nucleotide sequence ID" value="NC_005362.1"/>
</dbReference>
<dbReference type="SMR" id="Q74JJ5"/>
<dbReference type="KEGG" id="ljo:LJ_1112"/>
<dbReference type="PATRIC" id="fig|257314.6.peg.973"/>
<dbReference type="eggNOG" id="COG1220">
    <property type="taxonomic scope" value="Bacteria"/>
</dbReference>
<dbReference type="HOGENOM" id="CLU_033123_0_0_9"/>
<dbReference type="Proteomes" id="UP000000581">
    <property type="component" value="Chromosome"/>
</dbReference>
<dbReference type="GO" id="GO:0009376">
    <property type="term" value="C:HslUV protease complex"/>
    <property type="evidence" value="ECO:0007669"/>
    <property type="project" value="UniProtKB-UniRule"/>
</dbReference>
<dbReference type="GO" id="GO:0005524">
    <property type="term" value="F:ATP binding"/>
    <property type="evidence" value="ECO:0007669"/>
    <property type="project" value="UniProtKB-UniRule"/>
</dbReference>
<dbReference type="GO" id="GO:0016887">
    <property type="term" value="F:ATP hydrolysis activity"/>
    <property type="evidence" value="ECO:0007669"/>
    <property type="project" value="InterPro"/>
</dbReference>
<dbReference type="GO" id="GO:0008233">
    <property type="term" value="F:peptidase activity"/>
    <property type="evidence" value="ECO:0007669"/>
    <property type="project" value="InterPro"/>
</dbReference>
<dbReference type="GO" id="GO:0036402">
    <property type="term" value="F:proteasome-activating activity"/>
    <property type="evidence" value="ECO:0007669"/>
    <property type="project" value="UniProtKB-UniRule"/>
</dbReference>
<dbReference type="GO" id="GO:0043335">
    <property type="term" value="P:protein unfolding"/>
    <property type="evidence" value="ECO:0007669"/>
    <property type="project" value="UniProtKB-UniRule"/>
</dbReference>
<dbReference type="GO" id="GO:0051603">
    <property type="term" value="P:proteolysis involved in protein catabolic process"/>
    <property type="evidence" value="ECO:0007669"/>
    <property type="project" value="TreeGrafter"/>
</dbReference>
<dbReference type="CDD" id="cd19498">
    <property type="entry name" value="RecA-like_HslU"/>
    <property type="match status" value="1"/>
</dbReference>
<dbReference type="Gene3D" id="1.10.8.60">
    <property type="match status" value="1"/>
</dbReference>
<dbReference type="Gene3D" id="3.40.50.300">
    <property type="entry name" value="P-loop containing nucleotide triphosphate hydrolases"/>
    <property type="match status" value="2"/>
</dbReference>
<dbReference type="HAMAP" id="MF_00249">
    <property type="entry name" value="HslU"/>
    <property type="match status" value="1"/>
</dbReference>
<dbReference type="InterPro" id="IPR003593">
    <property type="entry name" value="AAA+_ATPase"/>
</dbReference>
<dbReference type="InterPro" id="IPR050052">
    <property type="entry name" value="ATP-dep_Clp_protease_ClpX"/>
</dbReference>
<dbReference type="InterPro" id="IPR003959">
    <property type="entry name" value="ATPase_AAA_core"/>
</dbReference>
<dbReference type="InterPro" id="IPR019489">
    <property type="entry name" value="Clp_ATPase_C"/>
</dbReference>
<dbReference type="InterPro" id="IPR004491">
    <property type="entry name" value="HslU"/>
</dbReference>
<dbReference type="InterPro" id="IPR027417">
    <property type="entry name" value="P-loop_NTPase"/>
</dbReference>
<dbReference type="NCBIfam" id="TIGR00390">
    <property type="entry name" value="hslU"/>
    <property type="match status" value="1"/>
</dbReference>
<dbReference type="NCBIfam" id="NF003544">
    <property type="entry name" value="PRK05201.1"/>
    <property type="match status" value="1"/>
</dbReference>
<dbReference type="PANTHER" id="PTHR48102">
    <property type="entry name" value="ATP-DEPENDENT CLP PROTEASE ATP-BINDING SUBUNIT CLPX-LIKE, MITOCHONDRIAL-RELATED"/>
    <property type="match status" value="1"/>
</dbReference>
<dbReference type="PANTHER" id="PTHR48102:SF3">
    <property type="entry name" value="ATP-DEPENDENT PROTEASE ATPASE SUBUNIT HSLU"/>
    <property type="match status" value="1"/>
</dbReference>
<dbReference type="Pfam" id="PF00004">
    <property type="entry name" value="AAA"/>
    <property type="match status" value="1"/>
</dbReference>
<dbReference type="Pfam" id="PF07724">
    <property type="entry name" value="AAA_2"/>
    <property type="match status" value="1"/>
</dbReference>
<dbReference type="Pfam" id="PF10431">
    <property type="entry name" value="ClpB_D2-small"/>
    <property type="match status" value="1"/>
</dbReference>
<dbReference type="SMART" id="SM00382">
    <property type="entry name" value="AAA"/>
    <property type="match status" value="1"/>
</dbReference>
<dbReference type="SMART" id="SM01086">
    <property type="entry name" value="ClpB_D2-small"/>
    <property type="match status" value="1"/>
</dbReference>
<dbReference type="SUPFAM" id="SSF52540">
    <property type="entry name" value="P-loop containing nucleoside triphosphate hydrolases"/>
    <property type="match status" value="1"/>
</dbReference>
<proteinExistence type="inferred from homology"/>
<accession>Q74JJ5</accession>
<protein>
    <recommendedName>
        <fullName evidence="1">ATP-dependent protease ATPase subunit HslU</fullName>
    </recommendedName>
    <alternativeName>
        <fullName evidence="1">Unfoldase HslU</fullName>
    </alternativeName>
</protein>
<sequence>MTEEKTPKQIVELLDKYIIGQNEAKKSVAVALYNRYRRLQLPKQMQQDITPKNMLMAGPTGVGKTEIARRLAKIVDAPFVKVEATKFTEVGYVGRDVESMVRDLVEEAVRMEEKDQFEHVKMQATKKANNRLVKLIVPGIKRENRENSMQQMMQMLSGNFNMNQPQDNEEVTDAIRNERLSVADQLNKGLLENREVTIEVEQAPKVNPMGDMMGQMGIDMSSLMGDLMPKKTVKRTLKVSDAREVLIQEESKKLINYDSLYQRAIERTQQNGIIFIDEIDKITAGNKKTSGEVSREGVQRDILPIVEGSTVSTKYGPVSTDHILFIAAGAFAESKPSDLIPELQGRFPIRVELNALTQEDFVKILKDPQNSLLKQYIALLKADGIKLVFTQEAIDRIAQIAFEVNQGTDNIGARRLATILEKLLEDVLYEGPDMNMGEITITQKYVDQKLSDIIINKDLTKFIL</sequence>
<reference key="1">
    <citation type="journal article" date="2004" name="Proc. Natl. Acad. Sci. U.S.A.">
        <title>The genome sequence of the probiotic intestinal bacterium Lactobacillus johnsonii NCC 533.</title>
        <authorList>
            <person name="Pridmore R.D."/>
            <person name="Berger B."/>
            <person name="Desiere F."/>
            <person name="Vilanova D."/>
            <person name="Barretto C."/>
            <person name="Pittet A.-C."/>
            <person name="Zwahlen M.-C."/>
            <person name="Rouvet M."/>
            <person name="Altermann E."/>
            <person name="Barrangou R."/>
            <person name="Mollet B."/>
            <person name="Mercenier A."/>
            <person name="Klaenhammer T."/>
            <person name="Arigoni F."/>
            <person name="Schell M.A."/>
        </authorList>
    </citation>
    <scope>NUCLEOTIDE SEQUENCE [LARGE SCALE GENOMIC DNA]</scope>
    <source>
        <strain>CNCM I-1225 / La1 / NCC 533</strain>
    </source>
</reference>
<comment type="function">
    <text evidence="1">ATPase subunit of a proteasome-like degradation complex; this subunit has chaperone activity. The binding of ATP and its subsequent hydrolysis by HslU are essential for unfolding of protein substrates subsequently hydrolyzed by HslV. HslU recognizes the N-terminal part of its protein substrates and unfolds these before they are guided to HslV for hydrolysis.</text>
</comment>
<comment type="subunit">
    <text evidence="1">A double ring-shaped homohexamer of HslV is capped on each side by a ring-shaped HslU homohexamer. The assembly of the HslU/HslV complex is dependent on binding of ATP.</text>
</comment>
<comment type="subcellular location">
    <subcellularLocation>
        <location evidence="1">Cytoplasm</location>
    </subcellularLocation>
</comment>
<comment type="similarity">
    <text evidence="1">Belongs to the ClpX chaperone family. HslU subfamily.</text>
</comment>
<name>HSLU_LACJO</name>
<evidence type="ECO:0000255" key="1">
    <source>
        <dbReference type="HAMAP-Rule" id="MF_00249"/>
    </source>
</evidence>
<feature type="chain" id="PRO_0000160512" description="ATP-dependent protease ATPase subunit HslU">
    <location>
        <begin position="1"/>
        <end position="464"/>
    </location>
</feature>
<feature type="binding site" evidence="1">
    <location>
        <position position="19"/>
    </location>
    <ligand>
        <name>ATP</name>
        <dbReference type="ChEBI" id="CHEBI:30616"/>
    </ligand>
</feature>
<feature type="binding site" evidence="1">
    <location>
        <begin position="61"/>
        <end position="66"/>
    </location>
    <ligand>
        <name>ATP</name>
        <dbReference type="ChEBI" id="CHEBI:30616"/>
    </ligand>
</feature>
<feature type="binding site" evidence="1">
    <location>
        <position position="277"/>
    </location>
    <ligand>
        <name>ATP</name>
        <dbReference type="ChEBI" id="CHEBI:30616"/>
    </ligand>
</feature>
<feature type="binding site" evidence="1">
    <location>
        <position position="342"/>
    </location>
    <ligand>
        <name>ATP</name>
        <dbReference type="ChEBI" id="CHEBI:30616"/>
    </ligand>
</feature>
<feature type="binding site" evidence="1">
    <location>
        <position position="414"/>
    </location>
    <ligand>
        <name>ATP</name>
        <dbReference type="ChEBI" id="CHEBI:30616"/>
    </ligand>
</feature>
<gene>
    <name evidence="1" type="primary">hslU</name>
    <name type="ordered locus">LJ_1112</name>
</gene>